<name>APT_PETMO</name>
<gene>
    <name evidence="1" type="primary">apt</name>
    <name type="ordered locus">Pmob_1065</name>
</gene>
<sequence>MEIVDLKKWIRDIPDFPEKGVIFRDITPLLKNPEVFKYSVEKIAELIKEWDFDCIVSPESRGFIFATPLAYLMNKEFVPIRKPGKLPYKTYSISYELEYGQTSLEMHVDAIDKGEKVIVVDDVLATGGTTKAIKELVDRAGGKTVGVVCLAELTYLNPRENLKDLEIASLIRY</sequence>
<accession>A9BG28</accession>
<keyword id="KW-0963">Cytoplasm</keyword>
<keyword id="KW-0328">Glycosyltransferase</keyword>
<keyword id="KW-0660">Purine salvage</keyword>
<keyword id="KW-0808">Transferase</keyword>
<protein>
    <recommendedName>
        <fullName evidence="1">Adenine phosphoribosyltransferase</fullName>
        <shortName evidence="1">APRT</shortName>
        <ecNumber evidence="1">2.4.2.7</ecNumber>
    </recommendedName>
</protein>
<organism>
    <name type="scientific">Petrotoga mobilis (strain DSM 10674 / SJ95)</name>
    <dbReference type="NCBI Taxonomy" id="403833"/>
    <lineage>
        <taxon>Bacteria</taxon>
        <taxon>Thermotogati</taxon>
        <taxon>Thermotogota</taxon>
        <taxon>Thermotogae</taxon>
        <taxon>Petrotogales</taxon>
        <taxon>Petrotogaceae</taxon>
        <taxon>Petrotoga</taxon>
    </lineage>
</organism>
<reference key="1">
    <citation type="submission" date="2007-11" db="EMBL/GenBank/DDBJ databases">
        <title>Complete sequence of Petroga mobilis SJ95.</title>
        <authorList>
            <consortium name="US DOE Joint Genome Institute"/>
            <person name="Copeland A."/>
            <person name="Lucas S."/>
            <person name="Lapidus A."/>
            <person name="Barry K."/>
            <person name="Glavina del Rio T."/>
            <person name="Dalin E."/>
            <person name="Tice H."/>
            <person name="Pitluck S."/>
            <person name="Meincke L."/>
            <person name="Brettin T."/>
            <person name="Bruce D."/>
            <person name="Detter J.C."/>
            <person name="Han C."/>
            <person name="Kuske C.R."/>
            <person name="Schmutz J."/>
            <person name="Larimer F."/>
            <person name="Land M."/>
            <person name="Hauser L."/>
            <person name="Kyrpides N."/>
            <person name="Mikhailova N."/>
            <person name="Noll K."/>
            <person name="Richardson P."/>
        </authorList>
    </citation>
    <scope>NUCLEOTIDE SEQUENCE [LARGE SCALE GENOMIC DNA]</scope>
    <source>
        <strain>DSM 10674 / SJ95</strain>
    </source>
</reference>
<proteinExistence type="inferred from homology"/>
<feature type="chain" id="PRO_0000329365" description="Adenine phosphoribosyltransferase">
    <location>
        <begin position="1"/>
        <end position="173"/>
    </location>
</feature>
<evidence type="ECO:0000255" key="1">
    <source>
        <dbReference type="HAMAP-Rule" id="MF_00004"/>
    </source>
</evidence>
<comment type="function">
    <text evidence="1">Catalyzes a salvage reaction resulting in the formation of AMP, that is energically less costly than de novo synthesis.</text>
</comment>
<comment type="catalytic activity">
    <reaction evidence="1">
        <text>AMP + diphosphate = 5-phospho-alpha-D-ribose 1-diphosphate + adenine</text>
        <dbReference type="Rhea" id="RHEA:16609"/>
        <dbReference type="ChEBI" id="CHEBI:16708"/>
        <dbReference type="ChEBI" id="CHEBI:33019"/>
        <dbReference type="ChEBI" id="CHEBI:58017"/>
        <dbReference type="ChEBI" id="CHEBI:456215"/>
        <dbReference type="EC" id="2.4.2.7"/>
    </reaction>
</comment>
<comment type="pathway">
    <text evidence="1">Purine metabolism; AMP biosynthesis via salvage pathway; AMP from adenine: step 1/1.</text>
</comment>
<comment type="subunit">
    <text evidence="1">Homodimer.</text>
</comment>
<comment type="subcellular location">
    <subcellularLocation>
        <location evidence="1">Cytoplasm</location>
    </subcellularLocation>
</comment>
<comment type="similarity">
    <text evidence="1">Belongs to the purine/pyrimidine phosphoribosyltransferase family.</text>
</comment>
<dbReference type="EC" id="2.4.2.7" evidence="1"/>
<dbReference type="EMBL" id="CP000879">
    <property type="protein sequence ID" value="ABX31784.1"/>
    <property type="molecule type" value="Genomic_DNA"/>
</dbReference>
<dbReference type="RefSeq" id="WP_012208885.1">
    <property type="nucleotide sequence ID" value="NC_010003.1"/>
</dbReference>
<dbReference type="SMR" id="A9BG28"/>
<dbReference type="STRING" id="403833.Pmob_1065"/>
<dbReference type="KEGG" id="pmo:Pmob_1065"/>
<dbReference type="eggNOG" id="COG0503">
    <property type="taxonomic scope" value="Bacteria"/>
</dbReference>
<dbReference type="HOGENOM" id="CLU_063339_3_0_0"/>
<dbReference type="OrthoDB" id="9803963at2"/>
<dbReference type="UniPathway" id="UPA00588">
    <property type="reaction ID" value="UER00646"/>
</dbReference>
<dbReference type="Proteomes" id="UP000000789">
    <property type="component" value="Chromosome"/>
</dbReference>
<dbReference type="GO" id="GO:0005737">
    <property type="term" value="C:cytoplasm"/>
    <property type="evidence" value="ECO:0007669"/>
    <property type="project" value="UniProtKB-SubCell"/>
</dbReference>
<dbReference type="GO" id="GO:0002055">
    <property type="term" value="F:adenine binding"/>
    <property type="evidence" value="ECO:0007669"/>
    <property type="project" value="TreeGrafter"/>
</dbReference>
<dbReference type="GO" id="GO:0003999">
    <property type="term" value="F:adenine phosphoribosyltransferase activity"/>
    <property type="evidence" value="ECO:0007669"/>
    <property type="project" value="UniProtKB-UniRule"/>
</dbReference>
<dbReference type="GO" id="GO:0016208">
    <property type="term" value="F:AMP binding"/>
    <property type="evidence" value="ECO:0007669"/>
    <property type="project" value="TreeGrafter"/>
</dbReference>
<dbReference type="GO" id="GO:0006168">
    <property type="term" value="P:adenine salvage"/>
    <property type="evidence" value="ECO:0007669"/>
    <property type="project" value="InterPro"/>
</dbReference>
<dbReference type="GO" id="GO:0044209">
    <property type="term" value="P:AMP salvage"/>
    <property type="evidence" value="ECO:0007669"/>
    <property type="project" value="UniProtKB-UniRule"/>
</dbReference>
<dbReference type="GO" id="GO:0006166">
    <property type="term" value="P:purine ribonucleoside salvage"/>
    <property type="evidence" value="ECO:0007669"/>
    <property type="project" value="UniProtKB-KW"/>
</dbReference>
<dbReference type="CDD" id="cd06223">
    <property type="entry name" value="PRTases_typeI"/>
    <property type="match status" value="1"/>
</dbReference>
<dbReference type="FunFam" id="3.40.50.2020:FF:000004">
    <property type="entry name" value="Adenine phosphoribosyltransferase"/>
    <property type="match status" value="1"/>
</dbReference>
<dbReference type="Gene3D" id="3.40.50.2020">
    <property type="match status" value="1"/>
</dbReference>
<dbReference type="HAMAP" id="MF_00004">
    <property type="entry name" value="Aden_phosphoribosyltr"/>
    <property type="match status" value="1"/>
</dbReference>
<dbReference type="InterPro" id="IPR005764">
    <property type="entry name" value="Ade_phspho_trans"/>
</dbReference>
<dbReference type="InterPro" id="IPR000836">
    <property type="entry name" value="PRibTrfase_dom"/>
</dbReference>
<dbReference type="InterPro" id="IPR029057">
    <property type="entry name" value="PRTase-like"/>
</dbReference>
<dbReference type="InterPro" id="IPR050054">
    <property type="entry name" value="UPRTase/APRTase"/>
</dbReference>
<dbReference type="NCBIfam" id="TIGR01090">
    <property type="entry name" value="apt"/>
    <property type="match status" value="1"/>
</dbReference>
<dbReference type="NCBIfam" id="NF002634">
    <property type="entry name" value="PRK02304.1-3"/>
    <property type="match status" value="1"/>
</dbReference>
<dbReference type="NCBIfam" id="NF002636">
    <property type="entry name" value="PRK02304.1-5"/>
    <property type="match status" value="1"/>
</dbReference>
<dbReference type="PANTHER" id="PTHR32315">
    <property type="entry name" value="ADENINE PHOSPHORIBOSYLTRANSFERASE"/>
    <property type="match status" value="1"/>
</dbReference>
<dbReference type="PANTHER" id="PTHR32315:SF3">
    <property type="entry name" value="ADENINE PHOSPHORIBOSYLTRANSFERASE"/>
    <property type="match status" value="1"/>
</dbReference>
<dbReference type="Pfam" id="PF00156">
    <property type="entry name" value="Pribosyltran"/>
    <property type="match status" value="1"/>
</dbReference>
<dbReference type="SUPFAM" id="SSF53271">
    <property type="entry name" value="PRTase-like"/>
    <property type="match status" value="1"/>
</dbReference>
<dbReference type="PROSITE" id="PS00103">
    <property type="entry name" value="PUR_PYR_PR_TRANSFER"/>
    <property type="match status" value="1"/>
</dbReference>